<keyword id="KW-0067">ATP-binding</keyword>
<keyword id="KW-0227">DNA damage</keyword>
<keyword id="KW-0234">DNA repair</keyword>
<keyword id="KW-0238">DNA-binding</keyword>
<keyword id="KW-0269">Exonuclease</keyword>
<keyword id="KW-0347">Helicase</keyword>
<keyword id="KW-0378">Hydrolase</keyword>
<keyword id="KW-0413">Isomerase</keyword>
<keyword id="KW-0540">Nuclease</keyword>
<keyword id="KW-0547">Nucleotide-binding</keyword>
<dbReference type="EC" id="3.1.-.-" evidence="1"/>
<dbReference type="EC" id="5.6.2.4" evidence="1"/>
<dbReference type="EMBL" id="CP001175">
    <property type="protein sequence ID" value="ACK38636.1"/>
    <property type="molecule type" value="Genomic_DNA"/>
</dbReference>
<dbReference type="RefSeq" id="WP_012580845.1">
    <property type="nucleotide sequence ID" value="NC_011660.1"/>
</dbReference>
<dbReference type="SMR" id="B8DF44"/>
<dbReference type="KEGG" id="lmh:LMHCC_0276"/>
<dbReference type="HOGENOM" id="CLU_001114_3_1_9"/>
<dbReference type="GO" id="GO:0005829">
    <property type="term" value="C:cytosol"/>
    <property type="evidence" value="ECO:0007669"/>
    <property type="project" value="TreeGrafter"/>
</dbReference>
<dbReference type="GO" id="GO:0033202">
    <property type="term" value="C:DNA helicase complex"/>
    <property type="evidence" value="ECO:0007669"/>
    <property type="project" value="TreeGrafter"/>
</dbReference>
<dbReference type="GO" id="GO:0043138">
    <property type="term" value="F:3'-5' DNA helicase activity"/>
    <property type="evidence" value="ECO:0007669"/>
    <property type="project" value="UniProtKB-UniRule"/>
</dbReference>
<dbReference type="GO" id="GO:0008408">
    <property type="term" value="F:3'-5' exonuclease activity"/>
    <property type="evidence" value="ECO:0007669"/>
    <property type="project" value="UniProtKB-UniRule"/>
</dbReference>
<dbReference type="GO" id="GO:0005524">
    <property type="term" value="F:ATP binding"/>
    <property type="evidence" value="ECO:0007669"/>
    <property type="project" value="UniProtKB-UniRule"/>
</dbReference>
<dbReference type="GO" id="GO:0016887">
    <property type="term" value="F:ATP hydrolysis activity"/>
    <property type="evidence" value="ECO:0007669"/>
    <property type="project" value="RHEA"/>
</dbReference>
<dbReference type="GO" id="GO:0003690">
    <property type="term" value="F:double-stranded DNA binding"/>
    <property type="evidence" value="ECO:0007669"/>
    <property type="project" value="UniProtKB-UniRule"/>
</dbReference>
<dbReference type="GO" id="GO:0000724">
    <property type="term" value="P:double-strand break repair via homologous recombination"/>
    <property type="evidence" value="ECO:0007669"/>
    <property type="project" value="UniProtKB-UniRule"/>
</dbReference>
<dbReference type="CDD" id="cd17932">
    <property type="entry name" value="DEXQc_UvrD"/>
    <property type="match status" value="1"/>
</dbReference>
<dbReference type="FunFam" id="3.40.50.300:FF:001164">
    <property type="entry name" value="ATP-dependent helicase/nuclease subunit A"/>
    <property type="match status" value="1"/>
</dbReference>
<dbReference type="FunFam" id="3.40.50.300:FF:001187">
    <property type="entry name" value="ATP-dependent helicase/nuclease subunit A"/>
    <property type="match status" value="1"/>
</dbReference>
<dbReference type="FunFam" id="3.40.50.300:FF:001196">
    <property type="entry name" value="ATP-dependent helicase/nuclease subunit A"/>
    <property type="match status" value="1"/>
</dbReference>
<dbReference type="FunFam" id="3.40.50.300:FF:001236">
    <property type="entry name" value="ATP-dependent helicase/nuclease subunit A"/>
    <property type="match status" value="1"/>
</dbReference>
<dbReference type="Gene3D" id="3.90.320.10">
    <property type="match status" value="1"/>
</dbReference>
<dbReference type="Gene3D" id="3.40.50.300">
    <property type="entry name" value="P-loop containing nucleotide triphosphate hydrolases"/>
    <property type="match status" value="4"/>
</dbReference>
<dbReference type="HAMAP" id="MF_01451">
    <property type="entry name" value="AddA"/>
    <property type="match status" value="1"/>
</dbReference>
<dbReference type="InterPro" id="IPR014152">
    <property type="entry name" value="AddA"/>
</dbReference>
<dbReference type="InterPro" id="IPR014017">
    <property type="entry name" value="DNA_helicase_UvrD-like_C"/>
</dbReference>
<dbReference type="InterPro" id="IPR000212">
    <property type="entry name" value="DNA_helicase_UvrD/REP"/>
</dbReference>
<dbReference type="InterPro" id="IPR027417">
    <property type="entry name" value="P-loop_NTPase"/>
</dbReference>
<dbReference type="InterPro" id="IPR011604">
    <property type="entry name" value="PDDEXK-like_dom_sf"/>
</dbReference>
<dbReference type="InterPro" id="IPR038726">
    <property type="entry name" value="PDDEXK_AddAB-type"/>
</dbReference>
<dbReference type="InterPro" id="IPR011335">
    <property type="entry name" value="Restrct_endonuc-II-like"/>
</dbReference>
<dbReference type="InterPro" id="IPR014016">
    <property type="entry name" value="UvrD-like_ATP-bd"/>
</dbReference>
<dbReference type="NCBIfam" id="TIGR02785">
    <property type="entry name" value="addA_Gpos"/>
    <property type="match status" value="1"/>
</dbReference>
<dbReference type="PANTHER" id="PTHR11070:SF48">
    <property type="entry name" value="ATP-DEPENDENT HELICASE_NUCLEASE SUBUNIT A"/>
    <property type="match status" value="1"/>
</dbReference>
<dbReference type="PANTHER" id="PTHR11070">
    <property type="entry name" value="UVRD / RECB / PCRA DNA HELICASE FAMILY MEMBER"/>
    <property type="match status" value="1"/>
</dbReference>
<dbReference type="Pfam" id="PF12705">
    <property type="entry name" value="PDDEXK_1"/>
    <property type="match status" value="1"/>
</dbReference>
<dbReference type="Pfam" id="PF00580">
    <property type="entry name" value="UvrD-helicase"/>
    <property type="match status" value="1"/>
</dbReference>
<dbReference type="Pfam" id="PF13361">
    <property type="entry name" value="UvrD_C"/>
    <property type="match status" value="1"/>
</dbReference>
<dbReference type="SUPFAM" id="SSF52540">
    <property type="entry name" value="P-loop containing nucleoside triphosphate hydrolases"/>
    <property type="match status" value="1"/>
</dbReference>
<dbReference type="SUPFAM" id="SSF52980">
    <property type="entry name" value="Restriction endonuclease-like"/>
    <property type="match status" value="1"/>
</dbReference>
<dbReference type="PROSITE" id="PS51198">
    <property type="entry name" value="UVRD_HELICASE_ATP_BIND"/>
    <property type="match status" value="1"/>
</dbReference>
<dbReference type="PROSITE" id="PS51217">
    <property type="entry name" value="UVRD_HELICASE_CTER"/>
    <property type="match status" value="1"/>
</dbReference>
<name>ADDA_LISMH</name>
<accession>B8DF44</accession>
<proteinExistence type="inferred from homology"/>
<feature type="chain" id="PRO_0000379297" description="ATP-dependent helicase/nuclease subunit A">
    <location>
        <begin position="1"/>
        <end position="1235"/>
    </location>
</feature>
<feature type="domain" description="UvrD-like helicase ATP-binding" evidence="1">
    <location>
        <begin position="12"/>
        <end position="482"/>
    </location>
</feature>
<feature type="domain" description="UvrD-like helicase C-terminal" evidence="1">
    <location>
        <begin position="509"/>
        <end position="800"/>
    </location>
</feature>
<feature type="binding site" evidence="1">
    <location>
        <begin position="33"/>
        <end position="40"/>
    </location>
    <ligand>
        <name>ATP</name>
        <dbReference type="ChEBI" id="CHEBI:30616"/>
    </ligand>
</feature>
<gene>
    <name evidence="1" type="primary">addA</name>
    <name type="ordered locus">LMHCC_0276</name>
</gene>
<comment type="function">
    <text evidence="1">The heterodimer acts as both an ATP-dependent DNA helicase and an ATP-dependent, dual-direction single-stranded exonuclease. Recognizes the chi site generating a DNA molecule suitable for the initiation of homologous recombination. The AddA nuclease domain is required for chi fragment generation; this subunit has the helicase and 3' -&gt; 5' nuclease activities.</text>
</comment>
<comment type="catalytic activity">
    <reaction evidence="1">
        <text>Couples ATP hydrolysis with the unwinding of duplex DNA by translocating in the 3'-5' direction.</text>
        <dbReference type="EC" id="5.6.2.4"/>
    </reaction>
</comment>
<comment type="catalytic activity">
    <reaction evidence="1">
        <text>ATP + H2O = ADP + phosphate + H(+)</text>
        <dbReference type="Rhea" id="RHEA:13065"/>
        <dbReference type="ChEBI" id="CHEBI:15377"/>
        <dbReference type="ChEBI" id="CHEBI:15378"/>
        <dbReference type="ChEBI" id="CHEBI:30616"/>
        <dbReference type="ChEBI" id="CHEBI:43474"/>
        <dbReference type="ChEBI" id="CHEBI:456216"/>
        <dbReference type="EC" id="5.6.2.4"/>
    </reaction>
</comment>
<comment type="cofactor">
    <cofactor evidence="1">
        <name>Mg(2+)</name>
        <dbReference type="ChEBI" id="CHEBI:18420"/>
    </cofactor>
</comment>
<comment type="subunit">
    <text evidence="1">Heterodimer of AddA and AddB/RexB.</text>
</comment>
<comment type="similarity">
    <text evidence="1">Belongs to the helicase family. AddA subfamily.</text>
</comment>
<sequence>MSLNIPPKPEESLWTDDQWKAIQAKGNNVLVAAAAGSGKTAVLVTRIIKKLIDESANLNVDELLIVTFTNASAAEMKFRIGKGLEEALGQNPDSAHLKRQVALLNYASISTLHSFCLEIIRKYYFEADIDPSFRLIEPIESSMIRDEVLEGLLEQEYGIENNEAFFHLVESFTGDRSDAELHSLISKLYDFSRANPDPNAWLEAMVNFYNTEEITSITELPYFPIIKEDIELRVNQAKNYLLNAIDYANENNGPAPYLATLENDLVQIQALSELNWSSWTHLKTSIENIDFKRIPTLKNKSDYDEVYVEEAKKFRDAAKKEMKNIATDWFSREEVNYLSDLEKMKPDIQTLSELVKKFAANFFEEKQQRGVLDFNDLEHLALKILLNGDKASEVAQNYQKQFKEVLIDEYQDTNMVQETILRLVTNPSEAQGNLFMVGDVKQSIYRFRLAEPTLFMTKYQTFQQDGSGNGIRIDLSQNFRSRKEVLDATNFIFRQLMDKHIAEIDYDTAAELTLGAKSPETNAMATELLLIDMKTEDTETEDELSPQELQKNQVESRTIAMKIREMIDNKFPIYDKKLKQNRPIQYRDIVILSRAMTSAPDMEEAMKVQDIPFYANNNSGYFETTEVATMIALMKVVDNPYQDIPLAAVLRSPIIGLNEEELGQIRMAKKKGYFYDALLAYKDITVSETADKISDFVQQLNNWRELSIRENLTSLIWQIYQETNFYEFVGGLPGGKQRQANLRALYDRANQYEKTSFRGLFRFVRFVERLEIRGDDLGTAKTLGEKEDVVRMMTIHASKGLEFPVVIVSGLSRKFNMRDIYSKTLLDKDYGFASSYRDVEKMIVYPTIMQQAIKQKKSREMIAEEMRVLYVALTRAEEKLILVATVPDFEKTSKNWLQVAKEKETILPAATRAKAKCYLDWIGNATIRHSAFKELLCEEMIQTLATEMKLQIEIKTKEMFLTNELERAESDNWLENIKEHQPVPIQSPYKDEIQRYMEYEYQNEAATEIRAKQSVTELKRQFSLQDNWSDTTLLKEFQKVSLDRPKFLQKNKLSATEIGTAMHTLMQAVSLDYKPTKEDLEQLLRTMREKDILTDAQIKAINIKQILDFFESPLGETMLQKKDLVKREVPFSYLLPVSELYENVDIDERVLIQGVVDSMIEEEETITLIDYKTDKIEGRYADWNAAEKVMKERYHIQIKLYAEAIQAISGKKVAAAYLYFFDGQHICQINTKEGL</sequence>
<reference key="1">
    <citation type="journal article" date="2011" name="J. Bacteriol.">
        <title>Genome sequence of lineage III Listeria monocytogenes strain HCC23.</title>
        <authorList>
            <person name="Steele C.L."/>
            <person name="Donaldson J.R."/>
            <person name="Paul D."/>
            <person name="Banes M.M."/>
            <person name="Arick T."/>
            <person name="Bridges S.M."/>
            <person name="Lawrence M.L."/>
        </authorList>
    </citation>
    <scope>NUCLEOTIDE SEQUENCE [LARGE SCALE GENOMIC DNA]</scope>
    <source>
        <strain>HCC23</strain>
    </source>
</reference>
<evidence type="ECO:0000255" key="1">
    <source>
        <dbReference type="HAMAP-Rule" id="MF_01451"/>
    </source>
</evidence>
<organism>
    <name type="scientific">Listeria monocytogenes serotype 4a (strain HCC23)</name>
    <dbReference type="NCBI Taxonomy" id="552536"/>
    <lineage>
        <taxon>Bacteria</taxon>
        <taxon>Bacillati</taxon>
        <taxon>Bacillota</taxon>
        <taxon>Bacilli</taxon>
        <taxon>Bacillales</taxon>
        <taxon>Listeriaceae</taxon>
        <taxon>Listeria</taxon>
    </lineage>
</organism>
<protein>
    <recommendedName>
        <fullName evidence="1">ATP-dependent helicase/nuclease subunit A</fullName>
        <ecNumber evidence="1">3.1.-.-</ecNumber>
        <ecNumber evidence="1">5.6.2.4</ecNumber>
    </recommendedName>
    <alternativeName>
        <fullName evidence="1">ATP-dependent helicase/nuclease AddA</fullName>
    </alternativeName>
    <alternativeName>
        <fullName evidence="1">DNA 3'-5' helicase AddA</fullName>
    </alternativeName>
</protein>